<feature type="chain" id="PRO_1000081275" description="Small ribosomal subunit protein uS7">
    <location>
        <begin position="1"/>
        <end position="156"/>
    </location>
</feature>
<accession>B0RB34</accession>
<name>RS7_CLASE</name>
<gene>
    <name evidence="1" type="primary">rpsG</name>
    <name type="ordered locus">CMS0278</name>
</gene>
<organism>
    <name type="scientific">Clavibacter sepedonicus</name>
    <name type="common">Clavibacter michiganensis subsp. sepedonicus</name>
    <dbReference type="NCBI Taxonomy" id="31964"/>
    <lineage>
        <taxon>Bacteria</taxon>
        <taxon>Bacillati</taxon>
        <taxon>Actinomycetota</taxon>
        <taxon>Actinomycetes</taxon>
        <taxon>Micrococcales</taxon>
        <taxon>Microbacteriaceae</taxon>
        <taxon>Clavibacter</taxon>
    </lineage>
</organism>
<dbReference type="EMBL" id="AM849034">
    <property type="protein sequence ID" value="CAQ00399.1"/>
    <property type="molecule type" value="Genomic_DNA"/>
</dbReference>
<dbReference type="RefSeq" id="WP_012297750.1">
    <property type="nucleotide sequence ID" value="NZ_MZMN01000003.1"/>
</dbReference>
<dbReference type="SMR" id="B0RB34"/>
<dbReference type="STRING" id="31964.CMS0278"/>
<dbReference type="KEGG" id="cms:CMS0278"/>
<dbReference type="eggNOG" id="COG0049">
    <property type="taxonomic scope" value="Bacteria"/>
</dbReference>
<dbReference type="HOGENOM" id="CLU_072226_1_1_11"/>
<dbReference type="OrthoDB" id="9807653at2"/>
<dbReference type="Proteomes" id="UP000001318">
    <property type="component" value="Chromosome"/>
</dbReference>
<dbReference type="GO" id="GO:0015935">
    <property type="term" value="C:small ribosomal subunit"/>
    <property type="evidence" value="ECO:0007669"/>
    <property type="project" value="InterPro"/>
</dbReference>
<dbReference type="GO" id="GO:0019843">
    <property type="term" value="F:rRNA binding"/>
    <property type="evidence" value="ECO:0007669"/>
    <property type="project" value="UniProtKB-UniRule"/>
</dbReference>
<dbReference type="GO" id="GO:0003735">
    <property type="term" value="F:structural constituent of ribosome"/>
    <property type="evidence" value="ECO:0007669"/>
    <property type="project" value="InterPro"/>
</dbReference>
<dbReference type="GO" id="GO:0000049">
    <property type="term" value="F:tRNA binding"/>
    <property type="evidence" value="ECO:0007669"/>
    <property type="project" value="UniProtKB-UniRule"/>
</dbReference>
<dbReference type="GO" id="GO:0006412">
    <property type="term" value="P:translation"/>
    <property type="evidence" value="ECO:0007669"/>
    <property type="project" value="UniProtKB-UniRule"/>
</dbReference>
<dbReference type="CDD" id="cd14869">
    <property type="entry name" value="uS7_Bacteria"/>
    <property type="match status" value="1"/>
</dbReference>
<dbReference type="FunFam" id="1.10.455.10:FF:000001">
    <property type="entry name" value="30S ribosomal protein S7"/>
    <property type="match status" value="1"/>
</dbReference>
<dbReference type="Gene3D" id="1.10.455.10">
    <property type="entry name" value="Ribosomal protein S7 domain"/>
    <property type="match status" value="1"/>
</dbReference>
<dbReference type="HAMAP" id="MF_00480_B">
    <property type="entry name" value="Ribosomal_uS7_B"/>
    <property type="match status" value="1"/>
</dbReference>
<dbReference type="InterPro" id="IPR000235">
    <property type="entry name" value="Ribosomal_uS7"/>
</dbReference>
<dbReference type="InterPro" id="IPR005717">
    <property type="entry name" value="Ribosomal_uS7_bac/org-type"/>
</dbReference>
<dbReference type="InterPro" id="IPR023798">
    <property type="entry name" value="Ribosomal_uS7_dom"/>
</dbReference>
<dbReference type="InterPro" id="IPR036823">
    <property type="entry name" value="Ribosomal_uS7_dom_sf"/>
</dbReference>
<dbReference type="NCBIfam" id="TIGR01029">
    <property type="entry name" value="rpsG_bact"/>
    <property type="match status" value="1"/>
</dbReference>
<dbReference type="PANTHER" id="PTHR11205">
    <property type="entry name" value="RIBOSOMAL PROTEIN S7"/>
    <property type="match status" value="1"/>
</dbReference>
<dbReference type="Pfam" id="PF00177">
    <property type="entry name" value="Ribosomal_S7"/>
    <property type="match status" value="1"/>
</dbReference>
<dbReference type="PIRSF" id="PIRSF002122">
    <property type="entry name" value="RPS7p_RPS7a_RPS5e_RPS7o"/>
    <property type="match status" value="1"/>
</dbReference>
<dbReference type="SUPFAM" id="SSF47973">
    <property type="entry name" value="Ribosomal protein S7"/>
    <property type="match status" value="1"/>
</dbReference>
<proteinExistence type="inferred from homology"/>
<sequence length="156" mass="17253">MPRKGPAPKRPVVADPVYGAPIVSQLVNKILLDGKKGLAERIVYDALAGVAAKNGQDAVVTLKKALDNVRPALEVRSRRVGGSTYQVPIEVKPHRANTLALRWLTTYAKSRREKTMTERLTNEILDASNGLGAAVKRREDTHKMAESNKAFAHYRW</sequence>
<reference key="1">
    <citation type="journal article" date="2008" name="J. Bacteriol.">
        <title>Genome of the actinomycete plant pathogen Clavibacter michiganensis subsp. sepedonicus suggests recent niche adaptation.</title>
        <authorList>
            <person name="Bentley S.D."/>
            <person name="Corton C."/>
            <person name="Brown S.E."/>
            <person name="Barron A."/>
            <person name="Clark L."/>
            <person name="Doggett J."/>
            <person name="Harris B."/>
            <person name="Ormond D."/>
            <person name="Quail M.A."/>
            <person name="May G."/>
            <person name="Francis D."/>
            <person name="Knudson D."/>
            <person name="Parkhill J."/>
            <person name="Ishimaru C.A."/>
        </authorList>
    </citation>
    <scope>NUCLEOTIDE SEQUENCE [LARGE SCALE GENOMIC DNA]</scope>
    <source>
        <strain>ATCC 33113 / DSM 20744 / JCM 9667 / LMG 2889 / ICMP 2535 / C-1</strain>
    </source>
</reference>
<evidence type="ECO:0000255" key="1">
    <source>
        <dbReference type="HAMAP-Rule" id="MF_00480"/>
    </source>
</evidence>
<evidence type="ECO:0000305" key="2"/>
<comment type="function">
    <text evidence="1">One of the primary rRNA binding proteins, it binds directly to 16S rRNA where it nucleates assembly of the head domain of the 30S subunit. Is located at the subunit interface close to the decoding center, probably blocks exit of the E-site tRNA.</text>
</comment>
<comment type="subunit">
    <text evidence="1">Part of the 30S ribosomal subunit. Contacts proteins S9 and S11.</text>
</comment>
<comment type="similarity">
    <text evidence="1">Belongs to the universal ribosomal protein uS7 family.</text>
</comment>
<keyword id="KW-0687">Ribonucleoprotein</keyword>
<keyword id="KW-0689">Ribosomal protein</keyword>
<keyword id="KW-0694">RNA-binding</keyword>
<keyword id="KW-0699">rRNA-binding</keyword>
<keyword id="KW-0820">tRNA-binding</keyword>
<protein>
    <recommendedName>
        <fullName evidence="1">Small ribosomal subunit protein uS7</fullName>
    </recommendedName>
    <alternativeName>
        <fullName evidence="2">30S ribosomal protein S7</fullName>
    </alternativeName>
</protein>